<gene>
    <name type="ordered locus">YPTB2038</name>
</gene>
<keyword id="KW-0963">Cytoplasm</keyword>
<keyword id="KW-0238">DNA-binding</keyword>
<keyword id="KW-0804">Transcription</keyword>
<keyword id="KW-0805">Transcription regulation</keyword>
<evidence type="ECO:0000255" key="1">
    <source>
        <dbReference type="HAMAP-Rule" id="MF_00693"/>
    </source>
</evidence>
<accession>Q66AU2</accession>
<feature type="chain" id="PRO_0000175940" description="Probable transcriptional regulatory protein YPTB2038">
    <location>
        <begin position="1"/>
        <end position="247"/>
    </location>
</feature>
<reference key="1">
    <citation type="journal article" date="2004" name="Proc. Natl. Acad. Sci. U.S.A.">
        <title>Insights into the evolution of Yersinia pestis through whole-genome comparison with Yersinia pseudotuberculosis.</title>
        <authorList>
            <person name="Chain P.S.G."/>
            <person name="Carniel E."/>
            <person name="Larimer F.W."/>
            <person name="Lamerdin J."/>
            <person name="Stoutland P.O."/>
            <person name="Regala W.M."/>
            <person name="Georgescu A.M."/>
            <person name="Vergez L.M."/>
            <person name="Land M.L."/>
            <person name="Motin V.L."/>
            <person name="Brubaker R.R."/>
            <person name="Fowler J."/>
            <person name="Hinnebusch J."/>
            <person name="Marceau M."/>
            <person name="Medigue C."/>
            <person name="Simonet M."/>
            <person name="Chenal-Francisque V."/>
            <person name="Souza B."/>
            <person name="Dacheux D."/>
            <person name="Elliott J.M."/>
            <person name="Derbise A."/>
            <person name="Hauser L.J."/>
            <person name="Garcia E."/>
        </authorList>
    </citation>
    <scope>NUCLEOTIDE SEQUENCE [LARGE SCALE GENOMIC DNA]</scope>
    <source>
        <strain>IP32953</strain>
    </source>
</reference>
<dbReference type="EMBL" id="BX936398">
    <property type="protein sequence ID" value="CAH21276.1"/>
    <property type="molecule type" value="Genomic_DNA"/>
</dbReference>
<dbReference type="RefSeq" id="WP_002211202.1">
    <property type="nucleotide sequence ID" value="NZ_CP009712.1"/>
</dbReference>
<dbReference type="SMR" id="Q66AU2"/>
<dbReference type="KEGG" id="ypo:BZ17_427"/>
<dbReference type="KEGG" id="yps:YPTB2038"/>
<dbReference type="PATRIC" id="fig|273123.14.peg.456"/>
<dbReference type="Proteomes" id="UP000001011">
    <property type="component" value="Chromosome"/>
</dbReference>
<dbReference type="GO" id="GO:0005829">
    <property type="term" value="C:cytosol"/>
    <property type="evidence" value="ECO:0007669"/>
    <property type="project" value="TreeGrafter"/>
</dbReference>
<dbReference type="GO" id="GO:0003677">
    <property type="term" value="F:DNA binding"/>
    <property type="evidence" value="ECO:0007669"/>
    <property type="project" value="UniProtKB-UniRule"/>
</dbReference>
<dbReference type="GO" id="GO:0006355">
    <property type="term" value="P:regulation of DNA-templated transcription"/>
    <property type="evidence" value="ECO:0007669"/>
    <property type="project" value="UniProtKB-UniRule"/>
</dbReference>
<dbReference type="FunFam" id="1.10.10.200:FF:000001">
    <property type="entry name" value="Probable transcriptional regulatory protein YebC"/>
    <property type="match status" value="1"/>
</dbReference>
<dbReference type="FunFam" id="3.30.70.980:FF:000002">
    <property type="entry name" value="Probable transcriptional regulatory protein YebC"/>
    <property type="match status" value="1"/>
</dbReference>
<dbReference type="Gene3D" id="1.10.10.200">
    <property type="match status" value="1"/>
</dbReference>
<dbReference type="Gene3D" id="3.30.70.980">
    <property type="match status" value="2"/>
</dbReference>
<dbReference type="HAMAP" id="MF_00693">
    <property type="entry name" value="Transcrip_reg_TACO1"/>
    <property type="match status" value="1"/>
</dbReference>
<dbReference type="InterPro" id="IPR017856">
    <property type="entry name" value="Integrase-like_N"/>
</dbReference>
<dbReference type="InterPro" id="IPR048300">
    <property type="entry name" value="TACO1_YebC-like_2nd/3rd_dom"/>
</dbReference>
<dbReference type="InterPro" id="IPR049083">
    <property type="entry name" value="TACO1_YebC_N"/>
</dbReference>
<dbReference type="InterPro" id="IPR002876">
    <property type="entry name" value="Transcrip_reg_TACO1-like"/>
</dbReference>
<dbReference type="InterPro" id="IPR026564">
    <property type="entry name" value="Transcrip_reg_TACO1-like_dom3"/>
</dbReference>
<dbReference type="InterPro" id="IPR029072">
    <property type="entry name" value="YebC-like"/>
</dbReference>
<dbReference type="NCBIfam" id="NF001030">
    <property type="entry name" value="PRK00110.1"/>
    <property type="match status" value="1"/>
</dbReference>
<dbReference type="NCBIfam" id="NF009044">
    <property type="entry name" value="PRK12378.1"/>
    <property type="match status" value="1"/>
</dbReference>
<dbReference type="NCBIfam" id="TIGR01033">
    <property type="entry name" value="YebC/PmpR family DNA-binding transcriptional regulator"/>
    <property type="match status" value="1"/>
</dbReference>
<dbReference type="PANTHER" id="PTHR12532:SF6">
    <property type="entry name" value="TRANSCRIPTIONAL REGULATORY PROTEIN YEBC-RELATED"/>
    <property type="match status" value="1"/>
</dbReference>
<dbReference type="PANTHER" id="PTHR12532">
    <property type="entry name" value="TRANSLATIONAL ACTIVATOR OF CYTOCHROME C OXIDASE 1"/>
    <property type="match status" value="1"/>
</dbReference>
<dbReference type="Pfam" id="PF20772">
    <property type="entry name" value="TACO1_YebC_N"/>
    <property type="match status" value="1"/>
</dbReference>
<dbReference type="Pfam" id="PF01709">
    <property type="entry name" value="Transcrip_reg"/>
    <property type="match status" value="1"/>
</dbReference>
<dbReference type="SUPFAM" id="SSF75625">
    <property type="entry name" value="YebC-like"/>
    <property type="match status" value="1"/>
</dbReference>
<proteinExistence type="inferred from homology"/>
<sequence length="247" mass="26243">MAGHSKWANTKHRKAAQDAKRGKIFTKIIRELVTAARLGGGDPGANPRLRAAIDKALSNNMTRDTLNRAIARGVGGDEDNNMETIIYEGYGPGGTAVMVECLSDNRNRTVSEVRHAFTKTGGNLGTDGSVSYLFTKKGVISYAPGLEEDTVMDAALEAGADDIVVYDDGAIDVFTAWESLGAVKDALDATGLVAEGAEVSLIPSTKAELDAETAPKLLRLIDMLEDSDDVQEVYHNGEISDEVAATL</sequence>
<name>Y2038_YERPS</name>
<organism>
    <name type="scientific">Yersinia pseudotuberculosis serotype I (strain IP32953)</name>
    <dbReference type="NCBI Taxonomy" id="273123"/>
    <lineage>
        <taxon>Bacteria</taxon>
        <taxon>Pseudomonadati</taxon>
        <taxon>Pseudomonadota</taxon>
        <taxon>Gammaproteobacteria</taxon>
        <taxon>Enterobacterales</taxon>
        <taxon>Yersiniaceae</taxon>
        <taxon>Yersinia</taxon>
    </lineage>
</organism>
<comment type="subcellular location">
    <subcellularLocation>
        <location evidence="1">Cytoplasm</location>
    </subcellularLocation>
</comment>
<comment type="similarity">
    <text evidence="1">Belongs to the TACO1 family.</text>
</comment>
<protein>
    <recommendedName>
        <fullName evidence="1">Probable transcriptional regulatory protein YPTB2038</fullName>
    </recommendedName>
</protein>